<gene>
    <name type="primary">Kcnj15</name>
</gene>
<reference key="1">
    <citation type="journal article" date="1999" name="J. Physiol. (Lond.)">
        <title>Expression of a functional Kir4 family inward rectifier K+ channel from a gene cloned from mouse liver.</title>
        <authorList>
            <person name="Pearson W.L."/>
            <person name="Dourado M."/>
            <person name="Schreiber M."/>
            <person name="Salkoff L."/>
            <person name="Nichols C.G."/>
        </authorList>
    </citation>
    <scope>NUCLEOTIDE SEQUENCE [MRNA]</scope>
    <scope>FUNCTION</scope>
    <scope>TRANSPORTER ACTIVITY</scope>
    <scope>ACTIVITY REGULATION</scope>
    <scope>INTERACTION WITH KCNJ16</scope>
    <source>
        <tissue>Liver</tissue>
    </source>
</reference>
<reference key="2">
    <citation type="journal article" date="2000" name="Mech. Dev.">
        <title>Developmentally regulated expression of the murine ortholog of the potassium channel KIR4.2 (KCNJ15).</title>
        <authorList>
            <person name="Thiery E."/>
            <person name="Gosset P."/>
            <person name="Damotte D."/>
            <person name="Delezoide A.-L."/>
            <person name="de Saint-Sauveur N."/>
            <person name="Vayssettes C."/>
            <person name="Creau N."/>
        </authorList>
    </citation>
    <scope>NUCLEOTIDE SEQUENCE [MRNA]</scope>
    <source>
        <strain>BALB/cJ</strain>
    </source>
</reference>
<reference key="3">
    <citation type="journal article" date="2005" name="Science">
        <title>The transcriptional landscape of the mammalian genome.</title>
        <authorList>
            <person name="Carninci P."/>
            <person name="Kasukawa T."/>
            <person name="Katayama S."/>
            <person name="Gough J."/>
            <person name="Frith M.C."/>
            <person name="Maeda N."/>
            <person name="Oyama R."/>
            <person name="Ravasi T."/>
            <person name="Lenhard B."/>
            <person name="Wells C."/>
            <person name="Kodzius R."/>
            <person name="Shimokawa K."/>
            <person name="Bajic V.B."/>
            <person name="Brenner S.E."/>
            <person name="Batalov S."/>
            <person name="Forrest A.R."/>
            <person name="Zavolan M."/>
            <person name="Davis M.J."/>
            <person name="Wilming L.G."/>
            <person name="Aidinis V."/>
            <person name="Allen J.E."/>
            <person name="Ambesi-Impiombato A."/>
            <person name="Apweiler R."/>
            <person name="Aturaliya R.N."/>
            <person name="Bailey T.L."/>
            <person name="Bansal M."/>
            <person name="Baxter L."/>
            <person name="Beisel K.W."/>
            <person name="Bersano T."/>
            <person name="Bono H."/>
            <person name="Chalk A.M."/>
            <person name="Chiu K.P."/>
            <person name="Choudhary V."/>
            <person name="Christoffels A."/>
            <person name="Clutterbuck D.R."/>
            <person name="Crowe M.L."/>
            <person name="Dalla E."/>
            <person name="Dalrymple B.P."/>
            <person name="de Bono B."/>
            <person name="Della Gatta G."/>
            <person name="di Bernardo D."/>
            <person name="Down T."/>
            <person name="Engstrom P."/>
            <person name="Fagiolini M."/>
            <person name="Faulkner G."/>
            <person name="Fletcher C.F."/>
            <person name="Fukushima T."/>
            <person name="Furuno M."/>
            <person name="Futaki S."/>
            <person name="Gariboldi M."/>
            <person name="Georgii-Hemming P."/>
            <person name="Gingeras T.R."/>
            <person name="Gojobori T."/>
            <person name="Green R.E."/>
            <person name="Gustincich S."/>
            <person name="Harbers M."/>
            <person name="Hayashi Y."/>
            <person name="Hensch T.K."/>
            <person name="Hirokawa N."/>
            <person name="Hill D."/>
            <person name="Huminiecki L."/>
            <person name="Iacono M."/>
            <person name="Ikeo K."/>
            <person name="Iwama A."/>
            <person name="Ishikawa T."/>
            <person name="Jakt M."/>
            <person name="Kanapin A."/>
            <person name="Katoh M."/>
            <person name="Kawasawa Y."/>
            <person name="Kelso J."/>
            <person name="Kitamura H."/>
            <person name="Kitano H."/>
            <person name="Kollias G."/>
            <person name="Krishnan S.P."/>
            <person name="Kruger A."/>
            <person name="Kummerfeld S.K."/>
            <person name="Kurochkin I.V."/>
            <person name="Lareau L.F."/>
            <person name="Lazarevic D."/>
            <person name="Lipovich L."/>
            <person name="Liu J."/>
            <person name="Liuni S."/>
            <person name="McWilliam S."/>
            <person name="Madan Babu M."/>
            <person name="Madera M."/>
            <person name="Marchionni L."/>
            <person name="Matsuda H."/>
            <person name="Matsuzawa S."/>
            <person name="Miki H."/>
            <person name="Mignone F."/>
            <person name="Miyake S."/>
            <person name="Morris K."/>
            <person name="Mottagui-Tabar S."/>
            <person name="Mulder N."/>
            <person name="Nakano N."/>
            <person name="Nakauchi H."/>
            <person name="Ng P."/>
            <person name="Nilsson R."/>
            <person name="Nishiguchi S."/>
            <person name="Nishikawa S."/>
            <person name="Nori F."/>
            <person name="Ohara O."/>
            <person name="Okazaki Y."/>
            <person name="Orlando V."/>
            <person name="Pang K.C."/>
            <person name="Pavan W.J."/>
            <person name="Pavesi G."/>
            <person name="Pesole G."/>
            <person name="Petrovsky N."/>
            <person name="Piazza S."/>
            <person name="Reed J."/>
            <person name="Reid J.F."/>
            <person name="Ring B.Z."/>
            <person name="Ringwald M."/>
            <person name="Rost B."/>
            <person name="Ruan Y."/>
            <person name="Salzberg S.L."/>
            <person name="Sandelin A."/>
            <person name="Schneider C."/>
            <person name="Schoenbach C."/>
            <person name="Sekiguchi K."/>
            <person name="Semple C.A."/>
            <person name="Seno S."/>
            <person name="Sessa L."/>
            <person name="Sheng Y."/>
            <person name="Shibata Y."/>
            <person name="Shimada H."/>
            <person name="Shimada K."/>
            <person name="Silva D."/>
            <person name="Sinclair B."/>
            <person name="Sperling S."/>
            <person name="Stupka E."/>
            <person name="Sugiura K."/>
            <person name="Sultana R."/>
            <person name="Takenaka Y."/>
            <person name="Taki K."/>
            <person name="Tammoja K."/>
            <person name="Tan S.L."/>
            <person name="Tang S."/>
            <person name="Taylor M.S."/>
            <person name="Tegner J."/>
            <person name="Teichmann S.A."/>
            <person name="Ueda H.R."/>
            <person name="van Nimwegen E."/>
            <person name="Verardo R."/>
            <person name="Wei C.L."/>
            <person name="Yagi K."/>
            <person name="Yamanishi H."/>
            <person name="Zabarovsky E."/>
            <person name="Zhu S."/>
            <person name="Zimmer A."/>
            <person name="Hide W."/>
            <person name="Bult C."/>
            <person name="Grimmond S.M."/>
            <person name="Teasdale R.D."/>
            <person name="Liu E.T."/>
            <person name="Brusic V."/>
            <person name="Quackenbush J."/>
            <person name="Wahlestedt C."/>
            <person name="Mattick J.S."/>
            <person name="Hume D.A."/>
            <person name="Kai C."/>
            <person name="Sasaki D."/>
            <person name="Tomaru Y."/>
            <person name="Fukuda S."/>
            <person name="Kanamori-Katayama M."/>
            <person name="Suzuki M."/>
            <person name="Aoki J."/>
            <person name="Arakawa T."/>
            <person name="Iida J."/>
            <person name="Imamura K."/>
            <person name="Itoh M."/>
            <person name="Kato T."/>
            <person name="Kawaji H."/>
            <person name="Kawagashira N."/>
            <person name="Kawashima T."/>
            <person name="Kojima M."/>
            <person name="Kondo S."/>
            <person name="Konno H."/>
            <person name="Nakano K."/>
            <person name="Ninomiya N."/>
            <person name="Nishio T."/>
            <person name="Okada M."/>
            <person name="Plessy C."/>
            <person name="Shibata K."/>
            <person name="Shiraki T."/>
            <person name="Suzuki S."/>
            <person name="Tagami M."/>
            <person name="Waki K."/>
            <person name="Watahiki A."/>
            <person name="Okamura-Oho Y."/>
            <person name="Suzuki H."/>
            <person name="Kawai J."/>
            <person name="Hayashizaki Y."/>
        </authorList>
    </citation>
    <scope>NUCLEOTIDE SEQUENCE [LARGE SCALE MRNA]</scope>
    <source>
        <strain>C57BL/6J</strain>
        <tissue>Mammary gland</tissue>
    </source>
</reference>
<reference key="4">
    <citation type="journal article" date="2004" name="Genome Res.">
        <title>The status, quality, and expansion of the NIH full-length cDNA project: the Mammalian Gene Collection (MGC).</title>
        <authorList>
            <consortium name="The MGC Project Team"/>
        </authorList>
    </citation>
    <scope>NUCLEOTIDE SEQUENCE [LARGE SCALE MRNA]</scope>
    <source>
        <strain>FVB/N</strain>
        <tissue>Kidney</tissue>
    </source>
</reference>
<reference key="5">
    <citation type="journal article" date="2021" name="J. Am. Soc. Nephrol.">
        <title>Defects in KCNJ16 cause a novel tubulopathy with hypokalemia, salt wasting, disturbed acid-base homeostasis, and sensorineural deafness.</title>
        <authorList>
            <person name="Schlingmann K.P."/>
            <person name="Renigunta A."/>
            <person name="Hoorn E.J."/>
            <person name="Forst A.L."/>
            <person name="Renigunta V."/>
            <person name="Atanasov V."/>
            <person name="Mahendran S."/>
            <person name="Barakat T.S."/>
            <person name="Gillion V."/>
            <person name="Godefroid N."/>
            <person name="Brooks A.S."/>
            <person name="Lugtenberg D."/>
            <person name="Lake J."/>
            <person name="Debaix H."/>
            <person name="Rudin C."/>
            <person name="Knebelmann B."/>
            <person name="Tellier S."/>
            <person name="Rousset-Rouviere C."/>
            <person name="Viering D."/>
            <person name="de Baaij J.H.F."/>
            <person name="Weber S."/>
            <person name="Palygin O."/>
            <person name="Staruschenko A."/>
            <person name="Kleta R."/>
            <person name="Houillier P."/>
            <person name="Bockenhauer D."/>
            <person name="Devuyst O."/>
            <person name="Vargas-Poussou R."/>
            <person name="Warth R."/>
            <person name="Zdebik A.A."/>
            <person name="Konrad M."/>
        </authorList>
    </citation>
    <scope>TISSUE SPECIFICITY</scope>
</reference>
<comment type="function">
    <text evidence="7">Inward rectifier potassium channels are characterized by a greater tendency to allow potassium to flow into the cell rather than out of it. Their voltage dependence is regulated by the concentration of extracellular potassium; as external potassium is raised, the voltage range of the channel opening shifts to more positive voltages (PubMed:9882736). The inward rectification is mainly due to the blockage of outward current by internal magnesium.</text>
</comment>
<comment type="catalytic activity">
    <reaction evidence="7">
        <text>K(+)(in) = K(+)(out)</text>
        <dbReference type="Rhea" id="RHEA:29463"/>
        <dbReference type="ChEBI" id="CHEBI:29103"/>
    </reaction>
</comment>
<comment type="activity regulation">
    <text evidence="7">Channel activity is regulated by variations of cytosolic pH; reversibly inhibited by acidic pH values (PubMed:9882736). Inhibited by Ba(2+) and Cs(+) in a voltage-dependent manner (PubMed:9882736).</text>
</comment>
<comment type="subunit">
    <text evidence="4 7">Can form heteromultimeric channels with Kir5.1/KCNJ16 (PubMed:9882736). Interacts with PATJ.</text>
</comment>
<comment type="subcellular location">
    <subcellularLocation>
        <location evidence="5">Membrane</location>
        <topology evidence="5">Multi-pass membrane protein</topology>
    </subcellularLocation>
    <subcellularLocation>
        <location evidence="3">Cell membrane</location>
    </subcellularLocation>
</comment>
<comment type="tissue specificity">
    <text evidence="6">Expressed in the proximal segment of the nephron.</text>
</comment>
<comment type="similarity">
    <text evidence="9">Belongs to the inward rectifier-type potassium channel (TC 1.A.2.1) family. KCNJ15 subfamily.</text>
</comment>
<evidence type="ECO:0000250" key="1"/>
<evidence type="ECO:0000250" key="2">
    <source>
        <dbReference type="UniProtKB" id="P49655"/>
    </source>
</evidence>
<evidence type="ECO:0000250" key="3">
    <source>
        <dbReference type="UniProtKB" id="Q91ZF1"/>
    </source>
</evidence>
<evidence type="ECO:0000250" key="4">
    <source>
        <dbReference type="UniProtKB" id="Q99712"/>
    </source>
</evidence>
<evidence type="ECO:0000255" key="5"/>
<evidence type="ECO:0000269" key="6">
    <source>
    </source>
</evidence>
<evidence type="ECO:0000269" key="7">
    <source>
    </source>
</evidence>
<evidence type="ECO:0000303" key="8">
    <source>
    </source>
</evidence>
<evidence type="ECO:0000305" key="9"/>
<organism>
    <name type="scientific">Mus musculus</name>
    <name type="common">Mouse</name>
    <dbReference type="NCBI Taxonomy" id="10090"/>
    <lineage>
        <taxon>Eukaryota</taxon>
        <taxon>Metazoa</taxon>
        <taxon>Chordata</taxon>
        <taxon>Craniata</taxon>
        <taxon>Vertebrata</taxon>
        <taxon>Euteleostomi</taxon>
        <taxon>Mammalia</taxon>
        <taxon>Eutheria</taxon>
        <taxon>Euarchontoglires</taxon>
        <taxon>Glires</taxon>
        <taxon>Rodentia</taxon>
        <taxon>Myomorpha</taxon>
        <taxon>Muroidea</taxon>
        <taxon>Muridae</taxon>
        <taxon>Murinae</taxon>
        <taxon>Mus</taxon>
        <taxon>Mus</taxon>
    </lineage>
</organism>
<accession>O88932</accession>
<accession>Q9JK34</accession>
<protein>
    <recommendedName>
        <fullName>ATP-sensitive inward rectifier potassium channel 15</fullName>
    </recommendedName>
    <alternativeName>
        <fullName evidence="8">Inward rectifier K(+) channel Kir4.2</fullName>
    </alternativeName>
    <alternativeName>
        <fullName>Potassium channel, inwardly rectifying subfamily J member 15</fullName>
    </alternativeName>
</protein>
<dbReference type="EMBL" id="AF085696">
    <property type="protein sequence ID" value="AAC68685.1"/>
    <property type="molecule type" value="mRNA"/>
</dbReference>
<dbReference type="EMBL" id="AJ012368">
    <property type="protein sequence ID" value="CAB89666.1"/>
    <property type="molecule type" value="mRNA"/>
</dbReference>
<dbReference type="EMBL" id="AK085689">
    <property type="protein sequence ID" value="BAC39507.1"/>
    <property type="molecule type" value="mRNA"/>
</dbReference>
<dbReference type="EMBL" id="BC010794">
    <property type="protein sequence ID" value="AAH10794.1"/>
    <property type="molecule type" value="mRNA"/>
</dbReference>
<dbReference type="EMBL" id="BC057915">
    <property type="protein sequence ID" value="AAH57915.1"/>
    <property type="molecule type" value="mRNA"/>
</dbReference>
<dbReference type="CCDS" id="CCDS37410.1"/>
<dbReference type="RefSeq" id="NP_001034145.1">
    <property type="nucleotide sequence ID" value="NM_001039056.2"/>
</dbReference>
<dbReference type="RefSeq" id="NP_001258618.1">
    <property type="nucleotide sequence ID" value="NM_001271689.1"/>
</dbReference>
<dbReference type="RefSeq" id="NP_001258620.1">
    <property type="nucleotide sequence ID" value="NM_001271691.1"/>
</dbReference>
<dbReference type="RefSeq" id="NP_001258622.1">
    <property type="nucleotide sequence ID" value="NM_001271693.1"/>
</dbReference>
<dbReference type="RefSeq" id="NP_001258624.1">
    <property type="nucleotide sequence ID" value="NM_001271695.1"/>
</dbReference>
<dbReference type="RefSeq" id="NP_062638.1">
    <property type="nucleotide sequence ID" value="NM_019664.5"/>
</dbReference>
<dbReference type="RefSeq" id="XP_006523014.1">
    <property type="nucleotide sequence ID" value="XM_006522951.4"/>
</dbReference>
<dbReference type="RefSeq" id="XP_006523015.1">
    <property type="nucleotide sequence ID" value="XM_006522952.5"/>
</dbReference>
<dbReference type="RefSeq" id="XP_017172374.1">
    <property type="nucleotide sequence ID" value="XM_017316885.1"/>
</dbReference>
<dbReference type="SMR" id="O88932"/>
<dbReference type="BioGRID" id="200898">
    <property type="interactions" value="2"/>
</dbReference>
<dbReference type="FunCoup" id="O88932">
    <property type="interactions" value="301"/>
</dbReference>
<dbReference type="IntAct" id="O88932">
    <property type="interactions" value="1"/>
</dbReference>
<dbReference type="MINT" id="O88932"/>
<dbReference type="STRING" id="10090.ENSMUSP00000109493"/>
<dbReference type="iPTMnet" id="O88932"/>
<dbReference type="PhosphoSitePlus" id="O88932"/>
<dbReference type="PaxDb" id="10090-ENSMUSP00000109493"/>
<dbReference type="ProteomicsDB" id="269188"/>
<dbReference type="Antibodypedia" id="3029">
    <property type="antibodies" value="184 antibodies from 29 providers"/>
</dbReference>
<dbReference type="DNASU" id="16516"/>
<dbReference type="Ensembl" id="ENSMUST00000113854.8">
    <property type="protein sequence ID" value="ENSMUSP00000109485.2"/>
    <property type="gene ID" value="ENSMUSG00000062609.15"/>
</dbReference>
<dbReference type="Ensembl" id="ENSMUST00000113855.8">
    <property type="protein sequence ID" value="ENSMUSP00000109486.2"/>
    <property type="gene ID" value="ENSMUSG00000062609.15"/>
</dbReference>
<dbReference type="Ensembl" id="ENSMUST00000113856.8">
    <property type="protein sequence ID" value="ENSMUSP00000109487.2"/>
    <property type="gene ID" value="ENSMUSG00000062609.15"/>
</dbReference>
<dbReference type="Ensembl" id="ENSMUST00000113858.3">
    <property type="protein sequence ID" value="ENSMUSP00000109489.3"/>
    <property type="gene ID" value="ENSMUSG00000062609.15"/>
</dbReference>
<dbReference type="GeneID" id="16516"/>
<dbReference type="KEGG" id="mmu:16516"/>
<dbReference type="UCSC" id="uc008abs.2">
    <property type="organism name" value="mouse"/>
</dbReference>
<dbReference type="AGR" id="MGI:1310000"/>
<dbReference type="CTD" id="3772"/>
<dbReference type="MGI" id="MGI:1310000">
    <property type="gene designation" value="Kcnj15"/>
</dbReference>
<dbReference type="VEuPathDB" id="HostDB:ENSMUSG00000062609"/>
<dbReference type="eggNOG" id="KOG3827">
    <property type="taxonomic scope" value="Eukaryota"/>
</dbReference>
<dbReference type="GeneTree" id="ENSGT00990000203615"/>
<dbReference type="HOGENOM" id="CLU_022738_3_3_1"/>
<dbReference type="InParanoid" id="O88932"/>
<dbReference type="OMA" id="LPMHRST"/>
<dbReference type="OrthoDB" id="273257at2759"/>
<dbReference type="PhylomeDB" id="O88932"/>
<dbReference type="Reactome" id="R-MMU-1296041">
    <property type="pathway name" value="Activation of G protein gated Potassium channels"/>
</dbReference>
<dbReference type="Reactome" id="R-MMU-997272">
    <property type="pathway name" value="Inhibition of voltage gated Ca2+ channels via Gbeta/gamma subunits"/>
</dbReference>
<dbReference type="BioGRID-ORCS" id="16516">
    <property type="hits" value="0 hits in 77 CRISPR screens"/>
</dbReference>
<dbReference type="ChiTaRS" id="Kcnj15">
    <property type="organism name" value="mouse"/>
</dbReference>
<dbReference type="PRO" id="PR:O88932"/>
<dbReference type="Proteomes" id="UP000000589">
    <property type="component" value="Chromosome 16"/>
</dbReference>
<dbReference type="RNAct" id="O88932">
    <property type="molecule type" value="protein"/>
</dbReference>
<dbReference type="Bgee" id="ENSMUSG00000062609">
    <property type="expression patterns" value="Expressed in epithelium of stomach and 143 other cell types or tissues"/>
</dbReference>
<dbReference type="ExpressionAtlas" id="O88932">
    <property type="expression patterns" value="baseline and differential"/>
</dbReference>
<dbReference type="GO" id="GO:0016020">
    <property type="term" value="C:membrane"/>
    <property type="evidence" value="ECO:0000305"/>
    <property type="project" value="MGI"/>
</dbReference>
<dbReference type="GO" id="GO:0034702">
    <property type="term" value="C:monoatomic ion channel complex"/>
    <property type="evidence" value="ECO:0007669"/>
    <property type="project" value="UniProtKB-KW"/>
</dbReference>
<dbReference type="GO" id="GO:0005886">
    <property type="term" value="C:plasma membrane"/>
    <property type="evidence" value="ECO:0007669"/>
    <property type="project" value="UniProtKB-SubCell"/>
</dbReference>
<dbReference type="GO" id="GO:0005242">
    <property type="term" value="F:inward rectifier potassium channel activity"/>
    <property type="evidence" value="ECO:0007669"/>
    <property type="project" value="InterPro"/>
</dbReference>
<dbReference type="GO" id="GO:0005267">
    <property type="term" value="F:potassium channel activity"/>
    <property type="evidence" value="ECO:0000314"/>
    <property type="project" value="MGI"/>
</dbReference>
<dbReference type="GO" id="GO:0006813">
    <property type="term" value="P:potassium ion transport"/>
    <property type="evidence" value="ECO:0000314"/>
    <property type="project" value="MGI"/>
</dbReference>
<dbReference type="FunFam" id="1.10.287.70:FF:000036">
    <property type="entry name" value="ATP-sensitive inward rectifier potassium channel 1"/>
    <property type="match status" value="1"/>
</dbReference>
<dbReference type="FunFam" id="2.60.40.1400:FF:000002">
    <property type="entry name" value="ATP-sensitive inward rectifier potassium channel 1"/>
    <property type="match status" value="1"/>
</dbReference>
<dbReference type="Gene3D" id="1.10.287.70">
    <property type="match status" value="1"/>
</dbReference>
<dbReference type="Gene3D" id="2.60.40.1400">
    <property type="entry name" value="G protein-activated inward rectifier potassium channel 1"/>
    <property type="match status" value="1"/>
</dbReference>
<dbReference type="InterPro" id="IPR014756">
    <property type="entry name" value="Ig_E-set"/>
</dbReference>
<dbReference type="InterPro" id="IPR041647">
    <property type="entry name" value="IRK_C"/>
</dbReference>
<dbReference type="InterPro" id="IPR016449">
    <property type="entry name" value="K_chnl_inward-rec_Kir"/>
</dbReference>
<dbReference type="InterPro" id="IPR003270">
    <property type="entry name" value="K_chnl_inward-rec_Kir1.3"/>
</dbReference>
<dbReference type="InterPro" id="IPR013518">
    <property type="entry name" value="K_chnl_inward-rec_Kir_cyto"/>
</dbReference>
<dbReference type="InterPro" id="IPR040445">
    <property type="entry name" value="Kir_TM"/>
</dbReference>
<dbReference type="PANTHER" id="PTHR11767:SF20">
    <property type="entry name" value="ATP-SENSITIVE INWARD RECTIFIER POTASSIUM CHANNEL 15"/>
    <property type="match status" value="1"/>
</dbReference>
<dbReference type="PANTHER" id="PTHR11767">
    <property type="entry name" value="INWARD RECTIFIER POTASSIUM CHANNEL"/>
    <property type="match status" value="1"/>
</dbReference>
<dbReference type="Pfam" id="PF01007">
    <property type="entry name" value="IRK"/>
    <property type="match status" value="1"/>
</dbReference>
<dbReference type="Pfam" id="PF17655">
    <property type="entry name" value="IRK_C"/>
    <property type="match status" value="1"/>
</dbReference>
<dbReference type="PIRSF" id="PIRSF005465">
    <property type="entry name" value="GIRK_kir"/>
    <property type="match status" value="1"/>
</dbReference>
<dbReference type="PRINTS" id="PR01323">
    <property type="entry name" value="KIR13CHANNEL"/>
</dbReference>
<dbReference type="PRINTS" id="PR01320">
    <property type="entry name" value="KIRCHANNEL"/>
</dbReference>
<dbReference type="SUPFAM" id="SSF81296">
    <property type="entry name" value="E set domains"/>
    <property type="match status" value="1"/>
</dbReference>
<dbReference type="SUPFAM" id="SSF81324">
    <property type="entry name" value="Voltage-gated potassium channels"/>
    <property type="match status" value="1"/>
</dbReference>
<feature type="chain" id="PRO_0000154973" description="ATP-sensitive inward rectifier potassium channel 15">
    <location>
        <begin position="1"/>
        <end position="375"/>
    </location>
</feature>
<feature type="topological domain" description="Cytoplasmic" evidence="2">
    <location>
        <begin position="1"/>
        <end position="60"/>
    </location>
</feature>
<feature type="transmembrane region" description="Helical; Name=M1" evidence="2">
    <location>
        <begin position="61"/>
        <end position="87"/>
    </location>
</feature>
<feature type="topological domain" description="Extracellular" evidence="2">
    <location>
        <begin position="88"/>
        <end position="113"/>
    </location>
</feature>
<feature type="intramembrane region" description="Helical; Pore-forming; Name=H5" evidence="2">
    <location>
        <begin position="114"/>
        <end position="130"/>
    </location>
</feature>
<feature type="topological domain" description="Extracellular" evidence="2">
    <location>
        <begin position="131"/>
        <end position="139"/>
    </location>
</feature>
<feature type="transmembrane region" description="Helical; Name=M2" evidence="2">
    <location>
        <begin position="140"/>
        <end position="165"/>
    </location>
</feature>
<feature type="topological domain" description="Cytoplasmic" evidence="2">
    <location>
        <begin position="166"/>
        <end position="375"/>
    </location>
</feature>
<feature type="short sequence motif" description="Selectivity filter" evidence="9">
    <location>
        <begin position="127"/>
        <end position="132"/>
    </location>
</feature>
<feature type="site" description="Role in the control of polyamine-mediated channel gating and in the blocking by intracellular magnesium" evidence="1">
    <location>
        <position position="157"/>
    </location>
</feature>
<feature type="sequence conflict" description="In Ref. 2; CAB89666." evidence="9" ref="2">
    <original>V</original>
    <variation>W</variation>
    <location>
        <position position="14"/>
    </location>
</feature>
<feature type="sequence conflict" description="In Ref. 2; CAB89666." evidence="9" ref="2">
    <original>E</original>
    <variation>G</variation>
    <location>
        <position position="99"/>
    </location>
</feature>
<feature type="sequence conflict" description="In Ref. 2; CAB89666." evidence="9" ref="2">
    <original>S</original>
    <variation>K</variation>
    <location>
        <position position="262"/>
    </location>
</feature>
<sequence>MDAIHLGMSSAPLVKHTNGVGLKAHRPRVMSKSGHSNVRIDKVDGIYLLYLQDLWTTVIDMKWRYKLTLFAATFVMTWFLFGVVYYAIAFIHGDLQLGESNSNHTPCIMKVDSLTGAFLFSLESQTTIGYGVRSITEECPHAIFLLVAQLVITTLIEIFITGTFLAKIARPKKRAETIKFSHCAVISKQNGKLCLVIQVANMRKSLLIQCQLSGKLLQTHVTKEGERILLNQATVKFHVDSSSESPFLILPMTFYHVLDETSPLRDLTPQNLKEKEFELVVLLNATVESTSAVCQSRTSYIPEEIYWGFEFVPVVSLSKNGKYVADFSQFEQIRKSPDCTFYCADSEKQKLEEQYRQEDQRERELRSLLLQQSNV</sequence>
<proteinExistence type="evidence at protein level"/>
<keyword id="KW-1003">Cell membrane</keyword>
<keyword id="KW-0407">Ion channel</keyword>
<keyword id="KW-0406">Ion transport</keyword>
<keyword id="KW-0472">Membrane</keyword>
<keyword id="KW-0630">Potassium</keyword>
<keyword id="KW-0633">Potassium transport</keyword>
<keyword id="KW-1185">Reference proteome</keyword>
<keyword id="KW-0812">Transmembrane</keyword>
<keyword id="KW-1133">Transmembrane helix</keyword>
<keyword id="KW-0813">Transport</keyword>
<keyword id="KW-0851">Voltage-gated channel</keyword>
<name>KCJ15_MOUSE</name>